<dbReference type="EMBL" id="CP001340">
    <property type="protein sequence ID" value="ACL94686.1"/>
    <property type="molecule type" value="Genomic_DNA"/>
</dbReference>
<dbReference type="RefSeq" id="WP_012640163.1">
    <property type="nucleotide sequence ID" value="NC_011916.1"/>
</dbReference>
<dbReference type="RefSeq" id="YP_002516594.1">
    <property type="nucleotide sequence ID" value="NC_011916.1"/>
</dbReference>
<dbReference type="SMR" id="A0A0H3C7L7"/>
<dbReference type="GeneID" id="7333614"/>
<dbReference type="KEGG" id="ccs:CCNA_01221"/>
<dbReference type="PATRIC" id="fig|565050.3.peg.1203"/>
<dbReference type="HOGENOM" id="CLU_108696_13_0_5"/>
<dbReference type="OrthoDB" id="287644at2"/>
<dbReference type="PhylomeDB" id="A0A0H3C7L7"/>
<dbReference type="UniPathway" id="UPA00222"/>
<dbReference type="Proteomes" id="UP000001364">
    <property type="component" value="Chromosome"/>
</dbReference>
<dbReference type="GO" id="GO:0016020">
    <property type="term" value="C:membrane"/>
    <property type="evidence" value="ECO:0007669"/>
    <property type="project" value="GOC"/>
</dbReference>
<dbReference type="GO" id="GO:0006665">
    <property type="term" value="P:sphingolipid metabolic process"/>
    <property type="evidence" value="ECO:0007669"/>
    <property type="project" value="UniProtKB-UniPathway"/>
</dbReference>
<dbReference type="Gene3D" id="1.10.1200.10">
    <property type="entry name" value="ACP-like"/>
    <property type="match status" value="1"/>
</dbReference>
<dbReference type="InterPro" id="IPR036736">
    <property type="entry name" value="ACP-like_sf"/>
</dbReference>
<dbReference type="InterPro" id="IPR009081">
    <property type="entry name" value="PP-bd_ACP"/>
</dbReference>
<dbReference type="Pfam" id="PF00550">
    <property type="entry name" value="PP-binding"/>
    <property type="match status" value="1"/>
</dbReference>
<dbReference type="SUPFAM" id="SSF47336">
    <property type="entry name" value="ACP-like"/>
    <property type="match status" value="1"/>
</dbReference>
<dbReference type="PROSITE" id="PS50075">
    <property type="entry name" value="CARRIER"/>
    <property type="match status" value="1"/>
</dbReference>
<accession>A0A0H3C7L7</accession>
<name>ACPC_CAUVN</name>
<sequence>MIRMDTVTDLSLREIGVAATKVLGRAVEVRAESHIGRDLAVDSLALMNIIMELEDTFDISIPLDRLASVETAGDLSKLINDLRTRA</sequence>
<evidence type="ECO:0000255" key="1">
    <source>
        <dbReference type="PROSITE-ProRule" id="PRU00258"/>
    </source>
</evidence>
<evidence type="ECO:0000269" key="2">
    <source>
    </source>
</evidence>
<evidence type="ECO:0000269" key="3">
    <source>
    </source>
</evidence>
<evidence type="ECO:0000305" key="4"/>
<evidence type="ECO:0000312" key="5">
    <source>
        <dbReference type="EMBL" id="ACL94686.1"/>
    </source>
</evidence>
<comment type="function">
    <text evidence="2 3">Involved in de novo bacterial ceramide synthesis.</text>
</comment>
<comment type="pathway">
    <text evidence="4">Lipid metabolism; sphingolipid metabolism.</text>
</comment>
<comment type="disruption phenotype">
    <text evidence="2 3">Deletion mutant cannot form bacterial ceramide (PubMed:33063925, PubMed:34969973). Mutants are impaired in growth at elevated temperatures but are resistant towards the antibiotic polymyxin B (PubMed:33063925).</text>
</comment>
<comment type="similarity">
    <text evidence="4">Belongs to the acyl carrier protein (ACP) family.</text>
</comment>
<organism>
    <name type="scientific">Caulobacter vibrioides (strain NA1000 / CB15N)</name>
    <name type="common">Caulobacter crescentus</name>
    <dbReference type="NCBI Taxonomy" id="565050"/>
    <lineage>
        <taxon>Bacteria</taxon>
        <taxon>Pseudomonadati</taxon>
        <taxon>Pseudomonadota</taxon>
        <taxon>Alphaproteobacteria</taxon>
        <taxon>Caulobacterales</taxon>
        <taxon>Caulobacteraceae</taxon>
        <taxon>Caulobacter</taxon>
    </lineage>
</organism>
<proteinExistence type="inferred from homology"/>
<reference key="1">
    <citation type="journal article" date="2010" name="J. Bacteriol.">
        <title>The genetic basis of laboratory adaptation in Caulobacter crescentus.</title>
        <authorList>
            <person name="Marks M.E."/>
            <person name="Castro-Rojas C.M."/>
            <person name="Teiling C."/>
            <person name="Du L."/>
            <person name="Kapatral V."/>
            <person name="Walunas T.L."/>
            <person name="Crosson S."/>
        </authorList>
    </citation>
    <scope>NUCLEOTIDE SEQUENCE [LARGE SCALE GENOMIC DNA]</scope>
    <source>
        <strain>NA1000 / CB15N</strain>
    </source>
</reference>
<reference key="2">
    <citation type="journal article" date="2021" name="Environ. Microbiol.">
        <title>Five structural genes required for ceramide synthesis in Caulobacter and for bacterial survival.</title>
        <authorList>
            <person name="Olea-Ozuna R.J."/>
            <person name="Poggio S."/>
            <person name="Bergstroem E."/>
            <person name="Quiroz-Rocha E."/>
            <person name="Garcia-Soriano D.A."/>
            <person name="Sahonero-Canavesi D.X."/>
            <person name="Padilla-Gomez J."/>
            <person name="Martinez-Aguilar L."/>
            <person name="Lopez-Lara I.M."/>
            <person name="Thomas-Oates J."/>
            <person name="Geiger O."/>
        </authorList>
    </citation>
    <scope>FUNCTION</scope>
    <scope>DISRUPTION PHENOTYPE</scope>
    <source>
        <strain>NA1000 / CB15N</strain>
    </source>
</reference>
<reference key="3">
    <citation type="journal article" date="2022" name="Nat. Chem. Biol.">
        <title>Convergent evolution of bacterial ceramide synthesis.</title>
        <authorList>
            <person name="Stankeviciute G."/>
            <person name="Tang P."/>
            <person name="Ashley B."/>
            <person name="Chamberlain J.D."/>
            <person name="Hansen M.E.B."/>
            <person name="Coleman A."/>
            <person name="D'Emilia R."/>
            <person name="Fu L."/>
            <person name="Mohan E.C."/>
            <person name="Nguyen H."/>
            <person name="Guan Z."/>
            <person name="Campopiano D.J."/>
            <person name="Klein E.A."/>
        </authorList>
    </citation>
    <scope>FUNCTION</scope>
    <scope>DISRUPTION PHENOTYPE</scope>
    <source>
        <strain>NA1000 / CB15N</strain>
    </source>
</reference>
<feature type="chain" id="PRO_0000455455" description="Probable acyl carrier protein CCNA_01221">
    <location>
        <begin position="1"/>
        <end position="86"/>
    </location>
</feature>
<feature type="domain" description="Carrier" evidence="1">
    <location>
        <begin position="6"/>
        <end position="83"/>
    </location>
</feature>
<feature type="modified residue" description="O-(pantetheine 4'-phosphoryl)serine" evidence="1">
    <location>
        <position position="43"/>
    </location>
</feature>
<gene>
    <name evidence="5" type="ordered locus">CCNA_01221</name>
</gene>
<keyword id="KW-0443">Lipid metabolism</keyword>
<keyword id="KW-0596">Phosphopantetheine</keyword>
<keyword id="KW-0597">Phosphoprotein</keyword>
<keyword id="KW-1185">Reference proteome</keyword>
<protein>
    <recommendedName>
        <fullName evidence="4">Probable acyl carrier protein CCNA_01221</fullName>
    </recommendedName>
</protein>